<reference key="1">
    <citation type="journal article" date="1990" name="J. Biol. Chem.">
        <title>Bacillus subtilis 13-kilodalton cytochrome c-550 encoded by cccA consists of a membrane-anchor and a heme domain.</title>
        <authorList>
            <person name="von Wachenfeldt C."/>
            <person name="Hederstedt L."/>
        </authorList>
    </citation>
    <scope>NUCLEOTIDE SEQUENCE [GENOMIC DNA]</scope>
    <source>
        <strain>168</strain>
    </source>
</reference>
<reference key="2">
    <citation type="journal article" date="1996" name="Microbiology">
        <title>Systematic sequencing of the 283 kb 210 degrees-232 degrees region of the Bacillus subtilis genome containing the skin element and many sporulation genes.</title>
        <authorList>
            <person name="Mizuno M."/>
            <person name="Masuda S."/>
            <person name="Takemaru K."/>
            <person name="Hosono S."/>
            <person name="Sato T."/>
            <person name="Takeuchi M."/>
            <person name="Kobayashi Y."/>
        </authorList>
    </citation>
    <scope>NUCLEOTIDE SEQUENCE [GENOMIC DNA]</scope>
    <source>
        <strain>168 / JH642</strain>
    </source>
</reference>
<reference key="3">
    <citation type="journal article" date="1997" name="Nature">
        <title>The complete genome sequence of the Gram-positive bacterium Bacillus subtilis.</title>
        <authorList>
            <person name="Kunst F."/>
            <person name="Ogasawara N."/>
            <person name="Moszer I."/>
            <person name="Albertini A.M."/>
            <person name="Alloni G."/>
            <person name="Azevedo V."/>
            <person name="Bertero M.G."/>
            <person name="Bessieres P."/>
            <person name="Bolotin A."/>
            <person name="Borchert S."/>
            <person name="Borriss R."/>
            <person name="Boursier L."/>
            <person name="Brans A."/>
            <person name="Braun M."/>
            <person name="Brignell S.C."/>
            <person name="Bron S."/>
            <person name="Brouillet S."/>
            <person name="Bruschi C.V."/>
            <person name="Caldwell B."/>
            <person name="Capuano V."/>
            <person name="Carter N.M."/>
            <person name="Choi S.-K."/>
            <person name="Codani J.-J."/>
            <person name="Connerton I.F."/>
            <person name="Cummings N.J."/>
            <person name="Daniel R.A."/>
            <person name="Denizot F."/>
            <person name="Devine K.M."/>
            <person name="Duesterhoeft A."/>
            <person name="Ehrlich S.D."/>
            <person name="Emmerson P.T."/>
            <person name="Entian K.-D."/>
            <person name="Errington J."/>
            <person name="Fabret C."/>
            <person name="Ferrari E."/>
            <person name="Foulger D."/>
            <person name="Fritz C."/>
            <person name="Fujita M."/>
            <person name="Fujita Y."/>
            <person name="Fuma S."/>
            <person name="Galizzi A."/>
            <person name="Galleron N."/>
            <person name="Ghim S.-Y."/>
            <person name="Glaser P."/>
            <person name="Goffeau A."/>
            <person name="Golightly E.J."/>
            <person name="Grandi G."/>
            <person name="Guiseppi G."/>
            <person name="Guy B.J."/>
            <person name="Haga K."/>
            <person name="Haiech J."/>
            <person name="Harwood C.R."/>
            <person name="Henaut A."/>
            <person name="Hilbert H."/>
            <person name="Holsappel S."/>
            <person name="Hosono S."/>
            <person name="Hullo M.-F."/>
            <person name="Itaya M."/>
            <person name="Jones L.-M."/>
            <person name="Joris B."/>
            <person name="Karamata D."/>
            <person name="Kasahara Y."/>
            <person name="Klaerr-Blanchard M."/>
            <person name="Klein C."/>
            <person name="Kobayashi Y."/>
            <person name="Koetter P."/>
            <person name="Koningstein G."/>
            <person name="Krogh S."/>
            <person name="Kumano M."/>
            <person name="Kurita K."/>
            <person name="Lapidus A."/>
            <person name="Lardinois S."/>
            <person name="Lauber J."/>
            <person name="Lazarevic V."/>
            <person name="Lee S.-M."/>
            <person name="Levine A."/>
            <person name="Liu H."/>
            <person name="Masuda S."/>
            <person name="Mauel C."/>
            <person name="Medigue C."/>
            <person name="Medina N."/>
            <person name="Mellado R.P."/>
            <person name="Mizuno M."/>
            <person name="Moestl D."/>
            <person name="Nakai S."/>
            <person name="Noback M."/>
            <person name="Noone D."/>
            <person name="O'Reilly M."/>
            <person name="Ogawa K."/>
            <person name="Ogiwara A."/>
            <person name="Oudega B."/>
            <person name="Park S.-H."/>
            <person name="Parro V."/>
            <person name="Pohl T.M."/>
            <person name="Portetelle D."/>
            <person name="Porwollik S."/>
            <person name="Prescott A.M."/>
            <person name="Presecan E."/>
            <person name="Pujic P."/>
            <person name="Purnelle B."/>
            <person name="Rapoport G."/>
            <person name="Rey M."/>
            <person name="Reynolds S."/>
            <person name="Rieger M."/>
            <person name="Rivolta C."/>
            <person name="Rocha E."/>
            <person name="Roche B."/>
            <person name="Rose M."/>
            <person name="Sadaie Y."/>
            <person name="Sato T."/>
            <person name="Scanlan E."/>
            <person name="Schleich S."/>
            <person name="Schroeter R."/>
            <person name="Scoffone F."/>
            <person name="Sekiguchi J."/>
            <person name="Sekowska A."/>
            <person name="Seror S.J."/>
            <person name="Serror P."/>
            <person name="Shin B.-S."/>
            <person name="Soldo B."/>
            <person name="Sorokin A."/>
            <person name="Tacconi E."/>
            <person name="Takagi T."/>
            <person name="Takahashi H."/>
            <person name="Takemaru K."/>
            <person name="Takeuchi M."/>
            <person name="Tamakoshi A."/>
            <person name="Tanaka T."/>
            <person name="Terpstra P."/>
            <person name="Tognoni A."/>
            <person name="Tosato V."/>
            <person name="Uchiyama S."/>
            <person name="Vandenbol M."/>
            <person name="Vannier F."/>
            <person name="Vassarotti A."/>
            <person name="Viari A."/>
            <person name="Wambutt R."/>
            <person name="Wedler E."/>
            <person name="Wedler H."/>
            <person name="Weitzenegger T."/>
            <person name="Winters P."/>
            <person name="Wipat A."/>
            <person name="Yamamoto H."/>
            <person name="Yamane K."/>
            <person name="Yasumoto K."/>
            <person name="Yata K."/>
            <person name="Yoshida K."/>
            <person name="Yoshikawa H.-F."/>
            <person name="Zumstein E."/>
            <person name="Yoshikawa H."/>
            <person name="Danchin A."/>
        </authorList>
    </citation>
    <scope>NUCLEOTIDE SEQUENCE [LARGE SCALE GENOMIC DNA]</scope>
    <source>
        <strain>168</strain>
    </source>
</reference>
<reference key="4">
    <citation type="journal article" date="1993" name="Eur. J. Biochem.">
        <title>Physico-chemical characterisation of membrane-bound and water-soluble forms of Bacillus subtilis cytochrome c-550.</title>
        <authorList>
            <person name="von Wachenfeldt C."/>
            <person name="Hederstedt L."/>
        </authorList>
    </citation>
    <scope>CHARACTERIZATION</scope>
</reference>
<feature type="chain" id="PRO_0000108419" description="Cytochrome c-550">
    <location>
        <begin position="1"/>
        <end position="120"/>
    </location>
</feature>
<feature type="transmembrane region" description="Helical" evidence="1">
    <location>
        <begin position="5"/>
        <end position="25"/>
    </location>
</feature>
<feature type="topological domain" description="Periplasmic" evidence="1">
    <location>
        <begin position="26"/>
        <end position="120"/>
    </location>
</feature>
<feature type="binding site" description="covalent" evidence="2">
    <location>
        <position position="60"/>
    </location>
    <ligand>
        <name>heme c</name>
        <dbReference type="ChEBI" id="CHEBI:61717"/>
    </ligand>
</feature>
<feature type="binding site" description="covalent" evidence="2">
    <location>
        <position position="63"/>
    </location>
    <ligand>
        <name>heme c</name>
        <dbReference type="ChEBI" id="CHEBI:61717"/>
    </ligand>
</feature>
<feature type="binding site" description="axial binding residue" evidence="2">
    <location>
        <position position="64"/>
    </location>
    <ligand>
        <name>heme c</name>
        <dbReference type="ChEBI" id="CHEBI:61717"/>
    </ligand>
    <ligandPart>
        <name>Fe</name>
        <dbReference type="ChEBI" id="CHEBI:18248"/>
    </ligandPart>
</feature>
<feature type="binding site" description="axial binding residue" evidence="2">
    <location>
        <position position="99"/>
    </location>
    <ligand>
        <name>heme c</name>
        <dbReference type="ChEBI" id="CHEBI:61717"/>
    </ligand>
    <ligandPart>
        <name>Fe</name>
        <dbReference type="ChEBI" id="CHEBI:18248"/>
    </ligandPart>
</feature>
<evidence type="ECO:0000255" key="1"/>
<evidence type="ECO:0000255" key="2">
    <source>
        <dbReference type="PROSITE-ProRule" id="PRU00433"/>
    </source>
</evidence>
<proteinExistence type="evidence at protein level"/>
<keyword id="KW-1003">Cell membrane</keyword>
<keyword id="KW-0249">Electron transport</keyword>
<keyword id="KW-0349">Heme</keyword>
<keyword id="KW-0408">Iron</keyword>
<keyword id="KW-0472">Membrane</keyword>
<keyword id="KW-0479">Metal-binding</keyword>
<keyword id="KW-1185">Reference proteome</keyword>
<keyword id="KW-0812">Transmembrane</keyword>
<keyword id="KW-1133">Transmembrane helix</keyword>
<keyword id="KW-0813">Transport</keyword>
<accession>P24469</accession>
<gene>
    <name type="primary">cccA</name>
    <name type="ordered locus">BSU25190</name>
</gene>
<dbReference type="EMBL" id="J05569">
    <property type="protein sequence ID" value="AAA22294.1"/>
    <property type="molecule type" value="Genomic_DNA"/>
</dbReference>
<dbReference type="EMBL" id="D84432">
    <property type="protein sequence ID" value="BAA12490.1"/>
    <property type="molecule type" value="Genomic_DNA"/>
</dbReference>
<dbReference type="EMBL" id="AL009126">
    <property type="protein sequence ID" value="CAB14449.1"/>
    <property type="molecule type" value="Genomic_DNA"/>
</dbReference>
<dbReference type="PIR" id="A37129">
    <property type="entry name" value="A37129"/>
</dbReference>
<dbReference type="RefSeq" id="NP_390398.1">
    <property type="nucleotide sequence ID" value="NC_000964.3"/>
</dbReference>
<dbReference type="RefSeq" id="WP_003230068.1">
    <property type="nucleotide sequence ID" value="NZ_OZ025638.1"/>
</dbReference>
<dbReference type="SMR" id="P24469"/>
<dbReference type="DIP" id="DIP-61131N"/>
<dbReference type="FunCoup" id="P24469">
    <property type="interactions" value="66"/>
</dbReference>
<dbReference type="IntAct" id="P24469">
    <property type="interactions" value="1"/>
</dbReference>
<dbReference type="STRING" id="224308.BSU25190"/>
<dbReference type="PaxDb" id="224308-BSU25190"/>
<dbReference type="EnsemblBacteria" id="CAB14449">
    <property type="protein sequence ID" value="CAB14449"/>
    <property type="gene ID" value="BSU_25190"/>
</dbReference>
<dbReference type="GeneID" id="86872932"/>
<dbReference type="GeneID" id="937902"/>
<dbReference type="KEGG" id="bsu:BSU25190"/>
<dbReference type="PATRIC" id="fig|224308.179.peg.2738"/>
<dbReference type="eggNOG" id="COG2010">
    <property type="taxonomic scope" value="Bacteria"/>
</dbReference>
<dbReference type="InParanoid" id="P24469"/>
<dbReference type="OrthoDB" id="7933886at2"/>
<dbReference type="PhylomeDB" id="P24469"/>
<dbReference type="BioCyc" id="BSUB:BSU25190-MONOMER"/>
<dbReference type="BioCyc" id="MetaCyc:BSU25190-MONOMER"/>
<dbReference type="Proteomes" id="UP000001570">
    <property type="component" value="Chromosome"/>
</dbReference>
<dbReference type="GO" id="GO:0005886">
    <property type="term" value="C:plasma membrane"/>
    <property type="evidence" value="ECO:0007669"/>
    <property type="project" value="UniProtKB-SubCell"/>
</dbReference>
<dbReference type="GO" id="GO:0009055">
    <property type="term" value="F:electron transfer activity"/>
    <property type="evidence" value="ECO:0007669"/>
    <property type="project" value="InterPro"/>
</dbReference>
<dbReference type="GO" id="GO:0020037">
    <property type="term" value="F:heme binding"/>
    <property type="evidence" value="ECO:0007669"/>
    <property type="project" value="InterPro"/>
</dbReference>
<dbReference type="GO" id="GO:0005506">
    <property type="term" value="F:iron ion binding"/>
    <property type="evidence" value="ECO:0007669"/>
    <property type="project" value="InterPro"/>
</dbReference>
<dbReference type="Gene3D" id="1.10.760.10">
    <property type="entry name" value="Cytochrome c-like domain"/>
    <property type="match status" value="1"/>
</dbReference>
<dbReference type="InterPro" id="IPR009056">
    <property type="entry name" value="Cyt_c-like_dom"/>
</dbReference>
<dbReference type="InterPro" id="IPR036909">
    <property type="entry name" value="Cyt_c-like_dom_sf"/>
</dbReference>
<dbReference type="InterPro" id="IPR012218">
    <property type="entry name" value="Cyt_c_BACSU-c550-type"/>
</dbReference>
<dbReference type="InterPro" id="IPR054780">
    <property type="entry name" value="Cytochro_C550_firm"/>
</dbReference>
<dbReference type="InterPro" id="IPR051811">
    <property type="entry name" value="Cytochrome_c550/c551-like"/>
</dbReference>
<dbReference type="NCBIfam" id="NF045773">
    <property type="entry name" value="cytochro_C550"/>
    <property type="match status" value="1"/>
</dbReference>
<dbReference type="PANTHER" id="PTHR37823:SF2">
    <property type="entry name" value="CYTOCHROME C-550"/>
    <property type="match status" value="1"/>
</dbReference>
<dbReference type="PANTHER" id="PTHR37823">
    <property type="entry name" value="CYTOCHROME C-553-LIKE"/>
    <property type="match status" value="1"/>
</dbReference>
<dbReference type="Pfam" id="PF13442">
    <property type="entry name" value="Cytochrome_CBB3"/>
    <property type="match status" value="1"/>
</dbReference>
<dbReference type="PIRSF" id="PIRSF000025">
    <property type="entry name" value="Cytc_Bsub_c550"/>
    <property type="match status" value="1"/>
</dbReference>
<dbReference type="SUPFAM" id="SSF46626">
    <property type="entry name" value="Cytochrome c"/>
    <property type="match status" value="1"/>
</dbReference>
<dbReference type="PROSITE" id="PS51007">
    <property type="entry name" value="CYTC"/>
    <property type="match status" value="1"/>
</dbReference>
<organism>
    <name type="scientific">Bacillus subtilis (strain 168)</name>
    <dbReference type="NCBI Taxonomy" id="224308"/>
    <lineage>
        <taxon>Bacteria</taxon>
        <taxon>Bacillati</taxon>
        <taxon>Bacillota</taxon>
        <taxon>Bacilli</taxon>
        <taxon>Bacillales</taxon>
        <taxon>Bacillaceae</taxon>
        <taxon>Bacillus</taxon>
    </lineage>
</organism>
<sequence length="120" mass="12766">MKWNPLIPFLLIAVLGIGLTFFLSVKGLDDSREIASGGESKSAEKKDANASPEEIYKANCIACHGENYEGVSGPSLKGVGDKKDVAEIKTKIEKGGNGMPSGLVPADKLDDMAEWVSKIK</sequence>
<protein>
    <recommendedName>
        <fullName>Cytochrome c-550</fullName>
    </recommendedName>
    <alternativeName>
        <fullName>Cytochrome c A</fullName>
    </alternativeName>
</protein>
<name>C550_BACSU</name>
<comment type="function">
    <text>Not essential for growth on minimal or rich media.</text>
</comment>
<comment type="biophysicochemical properties">
    <redoxPotential>
        <text>E(0) is about +178 mV.</text>
    </redoxPotential>
</comment>
<comment type="interaction">
    <interactant intactId="EBI-15573689">
        <id>P24469</id>
    </interactant>
    <interactant intactId="EBI-15573707">
        <id>P35160</id>
        <label>resA</label>
    </interactant>
    <organismsDiffer>false</organismsDiffer>
    <experiments>2</experiments>
</comment>
<comment type="subcellular location">
    <subcellularLocation>
        <location>Cell membrane</location>
        <topology>Single-pass membrane protein</topology>
    </subcellularLocation>
</comment>
<comment type="PTM">
    <text>Binds 1 heme c group covalently per subunit.</text>
</comment>